<sequence length="586" mass="67220">MTKTSKLDALRAATSREDLAKILDVKLVFLTNVLYRIGSDNQYTQFTIPKKGKGVRTISAPTDRLKDIQRRICDLLSDCRDEIFAIRKISNNYSFGFERGKSIILNAYKHRGKQIILNIDLKDFFESFNFGRVRGYFLSNQDFLLNPVVATTLAKAACYNGTLPQGSPCSPIISNLICNIMDMRLAKLAKKYGCTYSRYADDITISTNKNTFPLEMATVQPEGVVLGKVLVKEIENSGFEINDSKTRLTYKTSRQEVTGLTVNRIVNIDRCYYKKTRALAHALYRTGEYKVPDENGVLVSGGLDKLEGMFGFIDQVDKFNNIKKKLNKQPDRYVLTNATLHGFKLKLNAREKAYSKFIYYKFFHGNTCPTIITEGKTDRIYLKAALHSLETSYPELFREKTDSKKKEINLNIFKSNEKTKYFLDLSGGTADLKKFVERYKNNYASYYGSVPKQPVIMVLDNDTGPSDLLNFLRNKVKSCPDDVTEMRKMKYIHVFYNLYIVLTPLSPSGEQTSMEDLFPKDILDIKIDGKKFNKNNDGDSKTEYGKHIFSMRVVRDKKRKIDFKAFCCIFDAIKDIKEHYKLMLNS</sequence>
<name>RT67_ECOLX</name>
<evidence type="ECO:0000255" key="1">
    <source>
        <dbReference type="PROSITE-ProRule" id="PRU00405"/>
    </source>
</evidence>
<evidence type="ECO:0000269" key="2">
    <source>
    </source>
</evidence>
<evidence type="ECO:0000269" key="3">
    <source>
    </source>
</evidence>
<evidence type="ECO:0000269" key="4">
    <source>
    </source>
</evidence>
<evidence type="ECO:0000269" key="5">
    <source>
    </source>
</evidence>
<evidence type="ECO:0000303" key="6">
    <source>
    </source>
</evidence>
<evidence type="ECO:0000303" key="7">
    <source>
    </source>
</evidence>
<evidence type="ECO:0000303" key="8">
    <source>
    </source>
</evidence>
<evidence type="ECO:0000303" key="9">
    <source ref="4"/>
</evidence>
<evidence type="ECO:0000305" key="10"/>
<evidence type="ECO:0000305" key="11">
    <source>
    </source>
</evidence>
<evidence type="ECO:0000305" key="12">
    <source>
    </source>
</evidence>
<evidence type="ECO:0000312" key="13">
    <source>
        <dbReference type="EMBL" id="AAA23403.1"/>
    </source>
</evidence>
<evidence type="ECO:0000312" key="14">
    <source>
        <dbReference type="EMBL" id="AAA56874.1"/>
    </source>
</evidence>
<evidence type="ECO:0000312" key="15">
    <source>
        <dbReference type="EMBL" id="APL54601.1"/>
    </source>
</evidence>
<evidence type="ECO:0000312" key="16">
    <source>
        <dbReference type="EMBL" id="X60207"/>
    </source>
</evidence>
<gene>
    <name evidence="7" type="primary">ret</name>
    <name type="ORF">Ga0175966_113075</name>
    <name evidence="9" type="ORF">RG66_23265</name>
</gene>
<organism>
    <name type="scientific">Escherichia coli</name>
    <dbReference type="NCBI Taxonomy" id="562"/>
    <lineage>
        <taxon>Bacteria</taxon>
        <taxon>Pseudomonadati</taxon>
        <taxon>Pseudomonadota</taxon>
        <taxon>Gammaproteobacteria</taxon>
        <taxon>Enterobacterales</taxon>
        <taxon>Enterobacteriaceae</taxon>
        <taxon>Escherichia</taxon>
    </lineage>
</organism>
<keyword id="KW-0051">Antiviral defense</keyword>
<keyword id="KW-0255">Endonuclease</keyword>
<keyword id="KW-0378">Hydrolase</keyword>
<keyword id="KW-0460">Magnesium</keyword>
<keyword id="KW-0479">Metal-binding</keyword>
<keyword id="KW-0511">Multifunctional enzyme</keyword>
<keyword id="KW-0540">Nuclease</keyword>
<keyword id="KW-0548">Nucleotidyltransferase</keyword>
<keyword id="KW-0694">RNA-binding</keyword>
<keyword id="KW-0695">RNA-directed DNA polymerase</keyword>
<keyword id="KW-0808">Transferase</keyword>
<keyword id="KW-0814">Transposable element</keyword>
<feature type="chain" id="PRO_0000097508" description="Retron Ec67 protein">
    <location>
        <begin position="1"/>
        <end position="586"/>
    </location>
</feature>
<feature type="domain" description="Reverse transcriptase" evidence="1">
    <location>
        <begin position="29"/>
        <end position="262"/>
    </location>
</feature>
<feature type="binding site" evidence="1">
    <location>
        <position position="120"/>
    </location>
    <ligand>
        <name>Mg(2+)</name>
        <dbReference type="ChEBI" id="CHEBI:18420"/>
        <note>catalytic</note>
    </ligand>
</feature>
<feature type="binding site" evidence="1">
    <location>
        <position position="201"/>
    </location>
    <ligand>
        <name>Mg(2+)</name>
        <dbReference type="ChEBI" id="CHEBI:18420"/>
        <note>catalytic</note>
    </ligand>
</feature>
<feature type="binding site" evidence="1">
    <location>
        <position position="202"/>
    </location>
    <ligand>
        <name>Mg(2+)</name>
        <dbReference type="ChEBI" id="CHEBI:18420"/>
        <note>catalytic</note>
    </ligand>
</feature>
<feature type="mutagenesis site" description="No synthesis of msDNA." evidence="4">
    <location>
        <begin position="430"/>
        <end position="586"/>
    </location>
</feature>
<feature type="sequence conflict" description="In Ref. 1; AAA56874, 2; AAA23403 and 3; X60207." ref="1 2 3">
    <original>V</original>
    <variation>I</variation>
    <location>
        <position position="25"/>
    </location>
</feature>
<feature type="sequence conflict" description="In Ref. 1; AAA56874." evidence="10" ref="1">
    <original>T</original>
    <variation>R</variation>
    <location>
        <position position="47"/>
    </location>
</feature>
<feature type="sequence conflict" description="In Ref. 1; AAA56874." evidence="10" ref="1">
    <original>T</original>
    <variation>R</variation>
    <location>
        <position position="152"/>
    </location>
</feature>
<feature type="sequence conflict" description="In Ref. 1; AAA56874." evidence="10" ref="1">
    <original>T</original>
    <variation>R</variation>
    <location>
        <position position="211"/>
    </location>
</feature>
<feature type="sequence conflict" description="In Ref. 1; AAA56874." evidence="10" ref="1">
    <original>T</original>
    <variation>R</variation>
    <location>
        <position position="261"/>
    </location>
</feature>
<feature type="sequence conflict" description="In Ref. 1; AAA56874." evidence="10" ref="1">
    <original>H</original>
    <variation>D</variation>
    <location>
        <position position="341"/>
    </location>
</feature>
<feature type="sequence conflict" description="In Ref. 1; AAA56874." evidence="10" ref="1">
    <original>T</original>
    <variation>R</variation>
    <location>
        <position position="373"/>
    </location>
</feature>
<comment type="function">
    <text evidence="2 3 4 5">Reverse transcriptase (RT) component of antiviral defense system retron Ec67, minimally composed of a non-coding RNA (ncRNA) and this RT. Expression of these 2 elements confers protection against bacteriophage T5. At multiplicity of infection (MOI) of 0.02 cultures grow normally when infected with T5 without collapsing, at MOI 2 cultures enter growth stasis (PubMed:33157039). Responsible for synthesis of msDNA-Ec67 (a branched molecule with RNA linked by a 2',5'-phosphodiester bond to ssDNA). The retron transcript serves as primer (from a conserved internal G residue) and template for the reaction, and codes for the RT (PubMed:1378431, PubMed:1692831, PubMed:2466332). Can use other retrons as substrate (msDNA-Mx162 and msDNA-Ec86). Also able to synthesize DNA from a DNA template at least in vitro, although the enzyme is less active with a DNA template (PubMed:1692831).</text>
</comment>
<comment type="catalytic activity">
    <reaction evidence="1 2 11">
        <text>DNA(n) + a 2'-deoxyribonucleoside 5'-triphosphate = DNA(n+1) + diphosphate</text>
        <dbReference type="Rhea" id="RHEA:22508"/>
        <dbReference type="Rhea" id="RHEA-COMP:17339"/>
        <dbReference type="Rhea" id="RHEA-COMP:17340"/>
        <dbReference type="ChEBI" id="CHEBI:33019"/>
        <dbReference type="ChEBI" id="CHEBI:61560"/>
        <dbReference type="ChEBI" id="CHEBI:173112"/>
        <dbReference type="EC" id="2.7.7.49"/>
    </reaction>
</comment>
<comment type="catalytic activity">
    <reaction evidence="11">
        <text>Endonucleolytic cleavage to 5'-phosphomonoester.</text>
        <dbReference type="EC" id="3.1.26.4"/>
    </reaction>
</comment>
<comment type="domain">
    <text evidence="4 11 12">The N-terminus is the reverse transcriptase, the C-terminus (downstream of residue 430) is also required for msDNA synthesis (PubMed:2466332). The C-terminus was originally suggested to have RNase H activity, but may have another nuclease activity instead (Probable).</text>
</comment>
<comment type="disruption phenotype">
    <text evidence="2 4">No synthesis of msDNA.</text>
</comment>
<comment type="miscellaneous">
    <text>Retrons may be the ancestors of retrovirus.</text>
</comment>
<comment type="similarity">
    <text evidence="10">Belongs to the bacterial reverse transcriptase family.</text>
</comment>
<accession>P21325</accession>
<proteinExistence type="evidence at protein level"/>
<reference evidence="14" key="1">
    <citation type="journal article" date="1989" name="Science">
        <title>Reverse transcriptase in a clinical strain of Escherichia coli: production of branched RNA-linked msDNA.</title>
        <authorList>
            <person name="Lampson B.C."/>
            <person name="Sun J."/>
            <person name="Hsu M.-Y."/>
            <person name="Vallejo-Ramirez J."/>
            <person name="Inouye S."/>
            <person name="Inouye M."/>
        </authorList>
    </citation>
    <scope>NUCLEOTIDE SEQUENCE [GENOMIC DNA]</scope>
    <scope>PROBABLE FUNCTION AS A REVERSE TRANSCRIPTASE</scope>
    <scope>PROBABLE CATALYTIC ACTIVITY</scope>
    <scope>DOMAIN</scope>
    <scope>DISRUPTION PHENOTYPE</scope>
    <scope>MUTAGENESIS OF 430-ALA--SER-586</scope>
    <source>
        <strain>O1:NM / CL-1</strain>
    </source>
</reference>
<reference evidence="13" key="2">
    <citation type="journal article" date="1990" name="Proc. Natl. Acad. Sci. U.S.A.">
        <title>Retron for the 67-base multicopy single-stranded DNA from Escherichia coli: a potential transposable element encoding both reverse transcriptase and Dam methylase functions.</title>
        <authorList>
            <person name="Hsu M.-Y."/>
            <person name="Inouye M."/>
            <person name="Inouye S."/>
        </authorList>
    </citation>
    <scope>NUCLEOTIDE SEQUENCE [GENOMIC DNA]</scope>
    <source>
        <strain>O1:NM / CL-1</strain>
    </source>
</reference>
<reference evidence="16" key="3">
    <citation type="journal article" date="1991" name="Mol. Microbiol.">
        <title>Structure of two retrons of Escherichia coli and their common chromosomal insertion site.</title>
        <authorList>
            <person name="Lim D."/>
        </authorList>
    </citation>
    <scope>NUCLEOTIDE SEQUENCE [GENOMIC DNA]</scope>
    <source>
        <strain>R:H2 / Isolate 317 Brazil</strain>
    </source>
</reference>
<reference evidence="15" key="4">
    <citation type="submission" date="2014-11" db="EMBL/GenBank/DDBJ databases">
        <title>Vertical and Horizontal Evolutionary Story implied from E. coli complete genomes.</title>
        <authorList>
            <person name="Jiang J."/>
            <person name="Xu Z."/>
            <person name="Zhou Y."/>
            <person name="Zhao H."/>
            <person name="Leung F.C."/>
        </authorList>
    </citation>
    <scope>NUCLEOTIDE SEQUENCE [LARGE SCALE GENOMIC DNA]</scope>
    <source>
        <strain>S10</strain>
    </source>
</reference>
<reference key="5">
    <citation type="journal article" date="1990" name="J. Biol. Chem.">
        <title>Reverse transcriptase from Escherichia coli exists as a complex with msDNA and is able to synthesize double-stranded DNA.</title>
        <authorList>
            <person name="Lampson B.C."/>
            <person name="Viswanathan M."/>
            <person name="Inouye M."/>
            <person name="Inouye S."/>
        </authorList>
    </citation>
    <scope>FUNCTION</scope>
    <scope>MSDNA-BINDING</scope>
    <source>
        <strain>O1:NM / CL-1</strain>
    </source>
</reference>
<reference key="6">
    <citation type="journal article" date="1992" name="J. Biol. Chem.">
        <title>Cell-free synthesis of the branched RNA-linked msDNA from retron Ec67 of Escherichia coli.</title>
        <authorList>
            <person name="Hsu M.Y."/>
            <person name="Eagle S.G."/>
            <person name="Inouye M."/>
            <person name="Inouye S."/>
        </authorList>
    </citation>
    <scope>FUNCTION</scope>
    <scope>CATALYTIC ACTIVITY</scope>
    <scope>DISRUPTION PHENOTYPE</scope>
    <source>
        <strain>O1:NM / CL-1</strain>
    </source>
</reference>
<reference key="7">
    <citation type="journal article" date="2020" name="Cell">
        <title>Bacterial Retrons Function In Anti-Phage Defense.</title>
        <authorList>
            <person name="Millman A."/>
            <person name="Bernheim A."/>
            <person name="Stokar-Avihail A."/>
            <person name="Fedorenko T."/>
            <person name="Voichek M."/>
            <person name="Leavitt A."/>
            <person name="Oppenheimer-Shaanan Y."/>
            <person name="Sorek R."/>
        </authorList>
    </citation>
    <scope>FUNCTION IN ANTIVIRAL DEFENSE</scope>
    <scope>DOMAIN</scope>
    <source>
        <strain>S10</strain>
    </source>
</reference>
<dbReference type="EC" id="2.7.7.49" evidence="1 2 11"/>
<dbReference type="EC" id="3.1.26.4" evidence="11"/>
<dbReference type="EMBL" id="M24363">
    <property type="protein sequence ID" value="AAA56874.1"/>
    <property type="molecule type" value="Genomic_DNA"/>
</dbReference>
<dbReference type="EMBL" id="M55249">
    <property type="protein sequence ID" value="AAA23403.1"/>
    <property type="molecule type" value="Genomic_DNA"/>
</dbReference>
<dbReference type="EMBL" id="X60207">
    <property type="status" value="NOT_ANNOTATED_CDS"/>
    <property type="molecule type" value="Genomic_DNA"/>
</dbReference>
<dbReference type="EMBL" id="CP010229">
    <property type="protein sequence ID" value="APL54601.1"/>
    <property type="molecule type" value="Genomic_DNA"/>
</dbReference>
<dbReference type="PIR" id="S16654">
    <property type="entry name" value="S16654"/>
</dbReference>
<dbReference type="SMR" id="P21325"/>
<dbReference type="GO" id="GO:0046872">
    <property type="term" value="F:metal ion binding"/>
    <property type="evidence" value="ECO:0007669"/>
    <property type="project" value="UniProtKB-KW"/>
</dbReference>
<dbReference type="GO" id="GO:0003723">
    <property type="term" value="F:RNA binding"/>
    <property type="evidence" value="ECO:0007669"/>
    <property type="project" value="UniProtKB-KW"/>
</dbReference>
<dbReference type="GO" id="GO:0003964">
    <property type="term" value="F:RNA-directed DNA polymerase activity"/>
    <property type="evidence" value="ECO:0007669"/>
    <property type="project" value="UniProtKB-KW"/>
</dbReference>
<dbReference type="GO" id="GO:0004523">
    <property type="term" value="F:RNA-DNA hybrid ribonuclease activity"/>
    <property type="evidence" value="ECO:0007669"/>
    <property type="project" value="UniProtKB-EC"/>
</dbReference>
<dbReference type="GO" id="GO:0051607">
    <property type="term" value="P:defense response to virus"/>
    <property type="evidence" value="ECO:0007669"/>
    <property type="project" value="UniProtKB-KW"/>
</dbReference>
<dbReference type="CDD" id="cd03487">
    <property type="entry name" value="RT_Bac_retron_II"/>
    <property type="match status" value="1"/>
</dbReference>
<dbReference type="InterPro" id="IPR053543">
    <property type="entry name" value="Bacterial_RT"/>
</dbReference>
<dbReference type="InterPro" id="IPR043502">
    <property type="entry name" value="DNA/RNA_pol_sf"/>
</dbReference>
<dbReference type="InterPro" id="IPR051083">
    <property type="entry name" value="GrpII_Intron_Splice-Mob/Def"/>
</dbReference>
<dbReference type="InterPro" id="IPR000123">
    <property type="entry name" value="Reverse_transcriptase_msDNA"/>
</dbReference>
<dbReference type="InterPro" id="IPR000477">
    <property type="entry name" value="RT_dom"/>
</dbReference>
<dbReference type="NCBIfam" id="NF038237">
    <property type="entry name" value="retron_Ec67_fus"/>
    <property type="match status" value="1"/>
</dbReference>
<dbReference type="PANTHER" id="PTHR34047">
    <property type="entry name" value="NUCLEAR INTRON MATURASE 1, MITOCHONDRIAL-RELATED"/>
    <property type="match status" value="1"/>
</dbReference>
<dbReference type="PANTHER" id="PTHR34047:SF7">
    <property type="entry name" value="RNA-DIRECTED DNA POLYMERASE"/>
    <property type="match status" value="1"/>
</dbReference>
<dbReference type="Pfam" id="PF00078">
    <property type="entry name" value="RVT_1"/>
    <property type="match status" value="1"/>
</dbReference>
<dbReference type="PRINTS" id="PR00866">
    <property type="entry name" value="RNADNAPOLMS"/>
</dbReference>
<dbReference type="SUPFAM" id="SSF56672">
    <property type="entry name" value="DNA/RNA polymerases"/>
    <property type="match status" value="1"/>
</dbReference>
<dbReference type="PROSITE" id="PS50878">
    <property type="entry name" value="RT_POL"/>
    <property type="match status" value="1"/>
</dbReference>
<protein>
    <recommendedName>
        <fullName evidence="8">Retron Ec67 protein</fullName>
    </recommendedName>
    <alternativeName>
        <fullName evidence="6">ORF4-Ec67 RT</fullName>
    </alternativeName>
    <domain>
        <recommendedName>
            <fullName>RNA-directed DNA polymerase</fullName>
            <ecNumber evidence="1 2 11">2.7.7.49</ecNumber>
        </recommendedName>
        <alternativeName>
            <fullName evidence="8">Reverse transcriptase</fullName>
            <shortName evidence="8">RT</shortName>
        </alternativeName>
    </domain>
    <domain>
        <recommendedName>
            <fullName>Ribonuclease H</fullName>
            <shortName>RNase H</shortName>
            <ecNumber evidence="11">3.1.26.4</ecNumber>
        </recommendedName>
    </domain>
</protein>